<proteinExistence type="inferred from homology"/>
<dbReference type="EC" id="7.1.1.-"/>
<dbReference type="EMBL" id="AF494278">
    <property type="protein sequence ID" value="AAM96519.1"/>
    <property type="molecule type" value="Genomic_DNA"/>
</dbReference>
<dbReference type="RefSeq" id="NP_683848.1">
    <property type="nucleotide sequence ID" value="NC_004115.1"/>
</dbReference>
<dbReference type="SMR" id="Q8M9U5"/>
<dbReference type="GeneID" id="860801"/>
<dbReference type="GO" id="GO:0009535">
    <property type="term" value="C:chloroplast thylakoid membrane"/>
    <property type="evidence" value="ECO:0007669"/>
    <property type="project" value="UniProtKB-SubCell"/>
</dbReference>
<dbReference type="GO" id="GO:0008137">
    <property type="term" value="F:NADH dehydrogenase (ubiquinone) activity"/>
    <property type="evidence" value="ECO:0007669"/>
    <property type="project" value="InterPro"/>
</dbReference>
<dbReference type="GO" id="GO:0048038">
    <property type="term" value="F:quinone binding"/>
    <property type="evidence" value="ECO:0007669"/>
    <property type="project" value="UniProtKB-KW"/>
</dbReference>
<dbReference type="GO" id="GO:0042773">
    <property type="term" value="P:ATP synthesis coupled electron transport"/>
    <property type="evidence" value="ECO:0007669"/>
    <property type="project" value="InterPro"/>
</dbReference>
<dbReference type="GO" id="GO:0015990">
    <property type="term" value="P:electron transport coupled proton transport"/>
    <property type="evidence" value="ECO:0007669"/>
    <property type="project" value="TreeGrafter"/>
</dbReference>
<dbReference type="Gene3D" id="1.20.5.2700">
    <property type="match status" value="1"/>
</dbReference>
<dbReference type="InterPro" id="IPR002128">
    <property type="entry name" value="NADH_UbQ_OxRdtase_chlpt_su5_C"/>
</dbReference>
<dbReference type="InterPro" id="IPR018393">
    <property type="entry name" value="NADHpl_OxRdtase_5_subgr"/>
</dbReference>
<dbReference type="InterPro" id="IPR001750">
    <property type="entry name" value="ND/Mrp_TM"/>
</dbReference>
<dbReference type="InterPro" id="IPR003945">
    <property type="entry name" value="NU5C-like"/>
</dbReference>
<dbReference type="InterPro" id="IPR001516">
    <property type="entry name" value="Proton_antipo_N"/>
</dbReference>
<dbReference type="NCBIfam" id="TIGR01974">
    <property type="entry name" value="NDH_I_L"/>
    <property type="match status" value="1"/>
</dbReference>
<dbReference type="NCBIfam" id="NF005141">
    <property type="entry name" value="PRK06590.1"/>
    <property type="match status" value="1"/>
</dbReference>
<dbReference type="PANTHER" id="PTHR42829">
    <property type="entry name" value="NADH-UBIQUINONE OXIDOREDUCTASE CHAIN 5"/>
    <property type="match status" value="1"/>
</dbReference>
<dbReference type="PANTHER" id="PTHR42829:SF2">
    <property type="entry name" value="NADH-UBIQUINONE OXIDOREDUCTASE CHAIN 5"/>
    <property type="match status" value="1"/>
</dbReference>
<dbReference type="Pfam" id="PF01010">
    <property type="entry name" value="Proton_antipo_C"/>
    <property type="match status" value="1"/>
</dbReference>
<dbReference type="Pfam" id="PF00361">
    <property type="entry name" value="Proton_antipo_M"/>
    <property type="match status" value="1"/>
</dbReference>
<dbReference type="Pfam" id="PF00662">
    <property type="entry name" value="Proton_antipo_N"/>
    <property type="match status" value="1"/>
</dbReference>
<dbReference type="PRINTS" id="PR01434">
    <property type="entry name" value="NADHDHGNASE5"/>
</dbReference>
<dbReference type="PRINTS" id="PR01435">
    <property type="entry name" value="NPOXDRDTASE5"/>
</dbReference>
<accession>Q8M9U5</accession>
<geneLocation type="chloroplast"/>
<sequence length="670" mass="75081">MNLNYQYAGLIPILPVFPSIFIGIGLMSFRKSFRNLRKFVGSMSIAFMFLTLILSLLFFNDQLSESYSYRFLFPWLSTKNLTLDIGYLIDPLTSIMLVLVTSVAVTVMIYSDGYMLHDQGYIRFFAYLSLFTASMLGLIVSPNLIQVYVFWELIGMCSYLLVGFWSTRPTAASACQKAFITNRVGDFGLLLGILGFYWLTGSFQFDIIQDRLNELLLTNNLNFTLFIISSVLLFLGPIAKSAQFPLHIWLPDAMEGPTPISALIHAATMVAAGIFLVARLLPIFQLSPLLMILIAFTGAITALLGACLAVAQTDLKRGLAYSTMSQLGYMMLGLGIGGYQAAIFHLITHAYSKALLFLGSGSVIHSMEPVVGYDPNKSQNIDYMGGLRKYMPITGVTFLIGTLSLCGIPPFACFWSKDEIIADAFFHLPLLGFIAWLTAGLTGFYMFRLYLLTFEGEFRAHKNLKSSSLEYPHESSFSMTLPLILLMFPTIFIGFLGLPYNLGFIQSQILSTWLVGPSIDLNSSSNWIDFFKTSATSVGIAFLGICFSFLLYSPKNASNRDFNQISNPVPKGFLSSYVKSFYNWSLNRAYIDKFYELTWIKWCGIFAQFTSYLDRWFFDGFVNGVGLLTLISGEALRYGENGKVSSYLFVILFSFILLILLGNFNSVFYF</sequence>
<keyword id="KW-0150">Chloroplast</keyword>
<keyword id="KW-0472">Membrane</keyword>
<keyword id="KW-0520">NAD</keyword>
<keyword id="KW-0521">NADP</keyword>
<keyword id="KW-0934">Plastid</keyword>
<keyword id="KW-0618">Plastoquinone</keyword>
<keyword id="KW-0874">Quinone</keyword>
<keyword id="KW-0793">Thylakoid</keyword>
<keyword id="KW-1278">Translocase</keyword>
<keyword id="KW-0812">Transmembrane</keyword>
<keyword id="KW-1133">Transmembrane helix</keyword>
<keyword id="KW-0813">Transport</keyword>
<comment type="function">
    <text evidence="1">NDH shuttles electrons from NAD(P)H:plastoquinone, via FMN and iron-sulfur (Fe-S) centers, to quinones in the photosynthetic chain and possibly in a chloroplast respiratory chain. The immediate electron acceptor for the enzyme in this species is believed to be plastoquinone. Couples the redox reaction to proton translocation, and thus conserves the redox energy in a proton gradient (By similarity).</text>
</comment>
<comment type="catalytic activity">
    <reaction>
        <text>a plastoquinone + NADH + (n+1) H(+)(in) = a plastoquinol + NAD(+) + n H(+)(out)</text>
        <dbReference type="Rhea" id="RHEA:42608"/>
        <dbReference type="Rhea" id="RHEA-COMP:9561"/>
        <dbReference type="Rhea" id="RHEA-COMP:9562"/>
        <dbReference type="ChEBI" id="CHEBI:15378"/>
        <dbReference type="ChEBI" id="CHEBI:17757"/>
        <dbReference type="ChEBI" id="CHEBI:57540"/>
        <dbReference type="ChEBI" id="CHEBI:57945"/>
        <dbReference type="ChEBI" id="CHEBI:62192"/>
    </reaction>
</comment>
<comment type="catalytic activity">
    <reaction>
        <text>a plastoquinone + NADPH + (n+1) H(+)(in) = a plastoquinol + NADP(+) + n H(+)(out)</text>
        <dbReference type="Rhea" id="RHEA:42612"/>
        <dbReference type="Rhea" id="RHEA-COMP:9561"/>
        <dbReference type="Rhea" id="RHEA-COMP:9562"/>
        <dbReference type="ChEBI" id="CHEBI:15378"/>
        <dbReference type="ChEBI" id="CHEBI:17757"/>
        <dbReference type="ChEBI" id="CHEBI:57783"/>
        <dbReference type="ChEBI" id="CHEBI:58349"/>
        <dbReference type="ChEBI" id="CHEBI:62192"/>
    </reaction>
</comment>
<comment type="subunit">
    <text evidence="1">NDH is composed of at least 16 different subunits, 5 of which are encoded in the nucleus.</text>
</comment>
<comment type="subcellular location">
    <subcellularLocation>
        <location evidence="1">Plastid</location>
        <location evidence="1">Chloroplast thylakoid membrane</location>
        <topology evidence="1">Multi-pass membrane protein</topology>
    </subcellularLocation>
</comment>
<comment type="similarity">
    <text evidence="3">Belongs to the complex I subunit 5 family.</text>
</comment>
<evidence type="ECO:0000250" key="1"/>
<evidence type="ECO:0000255" key="2"/>
<evidence type="ECO:0000305" key="3"/>
<gene>
    <name type="primary">ndhF</name>
</gene>
<feature type="chain" id="PRO_0000360919" description="NAD(P)H-quinone oxidoreductase subunit 5, chloroplastic">
    <location>
        <begin position="1"/>
        <end position="670"/>
    </location>
</feature>
<feature type="transmembrane region" description="Helical" evidence="2">
    <location>
        <begin position="9"/>
        <end position="29"/>
    </location>
</feature>
<feature type="transmembrane region" description="Helical" evidence="2">
    <location>
        <begin position="39"/>
        <end position="59"/>
    </location>
</feature>
<feature type="transmembrane region" description="Helical" evidence="2">
    <location>
        <begin position="85"/>
        <end position="105"/>
    </location>
</feature>
<feature type="transmembrane region" description="Helical" evidence="2">
    <location>
        <begin position="120"/>
        <end position="140"/>
    </location>
</feature>
<feature type="transmembrane region" description="Helical" evidence="2">
    <location>
        <begin position="144"/>
        <end position="164"/>
    </location>
</feature>
<feature type="transmembrane region" description="Helical" evidence="2">
    <location>
        <begin position="188"/>
        <end position="208"/>
    </location>
</feature>
<feature type="transmembrane region" description="Helical" evidence="2">
    <location>
        <begin position="215"/>
        <end position="235"/>
    </location>
</feature>
<feature type="transmembrane region" description="Helical" evidence="2">
    <location>
        <begin position="258"/>
        <end position="278"/>
    </location>
</feature>
<feature type="transmembrane region" description="Helical" evidence="2">
    <location>
        <begin position="290"/>
        <end position="310"/>
    </location>
</feature>
<feature type="transmembrane region" description="Helical" evidence="2">
    <location>
        <begin position="327"/>
        <end position="347"/>
    </location>
</feature>
<feature type="transmembrane region" description="Helical" evidence="2">
    <location>
        <begin position="354"/>
        <end position="374"/>
    </location>
</feature>
<feature type="transmembrane region" description="Helical" evidence="2">
    <location>
        <begin position="395"/>
        <end position="415"/>
    </location>
</feature>
<feature type="transmembrane region" description="Helical" evidence="2">
    <location>
        <begin position="424"/>
        <end position="444"/>
    </location>
</feature>
<feature type="transmembrane region" description="Helical" evidence="2">
    <location>
        <begin position="479"/>
        <end position="499"/>
    </location>
</feature>
<feature type="transmembrane region" description="Helical" evidence="2">
    <location>
        <begin position="534"/>
        <end position="554"/>
    </location>
</feature>
<feature type="transmembrane region" description="Helical" evidence="2">
    <location>
        <begin position="648"/>
        <end position="668"/>
    </location>
</feature>
<reference key="1">
    <citation type="journal article" date="2002" name="Proc. Natl. Acad. Sci. U.S.A.">
        <title>The chloroplast and mitochondrial genome sequences of the charophyte Chaetosphaeridium globosum: insights into the timing of the events that restructured organelle DNAs within the green algal lineage that led to land plants.</title>
        <authorList>
            <person name="Turmel M."/>
            <person name="Otis C."/>
            <person name="Lemieux C."/>
        </authorList>
    </citation>
    <scope>NUCLEOTIDE SEQUENCE [LARGE SCALE GENOMIC DNA]</scope>
    <source>
        <strain>M1311</strain>
    </source>
</reference>
<protein>
    <recommendedName>
        <fullName>NAD(P)H-quinone oxidoreductase subunit 5, chloroplastic</fullName>
        <ecNumber>7.1.1.-</ecNumber>
    </recommendedName>
    <alternativeName>
        <fullName>NAD(P)H dehydrogenase subunit 5</fullName>
    </alternativeName>
    <alternativeName>
        <fullName>NADH-plastoquinone oxidoreductase subunit 5</fullName>
    </alternativeName>
</protein>
<organism>
    <name type="scientific">Chaetosphaeridium globosum</name>
    <name type="common">Charophycean green alga</name>
    <name type="synonym">Herposteiron globosum</name>
    <dbReference type="NCBI Taxonomy" id="96477"/>
    <lineage>
        <taxon>Eukaryota</taxon>
        <taxon>Viridiplantae</taxon>
        <taxon>Streptophyta</taxon>
        <taxon>Coleochaetophyceae</taxon>
        <taxon>Coleochaetales</taxon>
        <taxon>Chaetosphaeridiaceae</taxon>
        <taxon>Chaetosphaeridium</taxon>
    </lineage>
</organism>
<name>NU5C_CHAGL</name>